<feature type="chain" id="PRO_0000161711" description="Acidic phospholipase A2 5">
    <location>
        <begin position="1"/>
        <end position="122"/>
    </location>
</feature>
<feature type="active site" evidence="1">
    <location>
        <position position="47"/>
    </location>
</feature>
<feature type="active site" evidence="1">
    <location>
        <position position="89"/>
    </location>
</feature>
<feature type="binding site" evidence="1">
    <location>
        <position position="27"/>
    </location>
    <ligand>
        <name>Ca(2+)</name>
        <dbReference type="ChEBI" id="CHEBI:29108"/>
    </ligand>
</feature>
<feature type="binding site" evidence="1">
    <location>
        <position position="29"/>
    </location>
    <ligand>
        <name>Ca(2+)</name>
        <dbReference type="ChEBI" id="CHEBI:29108"/>
    </ligand>
</feature>
<feature type="binding site" evidence="1">
    <location>
        <position position="31"/>
    </location>
    <ligand>
        <name>Ca(2+)</name>
        <dbReference type="ChEBI" id="CHEBI:29108"/>
    </ligand>
</feature>
<feature type="binding site" evidence="1">
    <location>
        <position position="48"/>
    </location>
    <ligand>
        <name>Ca(2+)</name>
        <dbReference type="ChEBI" id="CHEBI:29108"/>
    </ligand>
</feature>
<feature type="disulfide bond" evidence="11">
    <location>
        <begin position="26"/>
        <end position="115"/>
    </location>
</feature>
<feature type="disulfide bond" evidence="11">
    <location>
        <begin position="28"/>
        <end position="44"/>
    </location>
</feature>
<feature type="disulfide bond" evidence="11">
    <location>
        <begin position="43"/>
        <end position="95"/>
    </location>
</feature>
<feature type="disulfide bond" evidence="11">
    <location>
        <begin position="49"/>
        <end position="122"/>
    </location>
</feature>
<feature type="disulfide bond" evidence="11">
    <location>
        <begin position="50"/>
        <end position="88"/>
    </location>
</feature>
<feature type="disulfide bond" evidence="11">
    <location>
        <begin position="57"/>
        <end position="81"/>
    </location>
</feature>
<feature type="disulfide bond" evidence="11">
    <location>
        <begin position="75"/>
        <end position="86"/>
    </location>
</feature>
<feature type="helix" evidence="12">
    <location>
        <begin position="2"/>
        <end position="13"/>
    </location>
</feature>
<feature type="helix" evidence="12">
    <location>
        <begin position="17"/>
        <end position="20"/>
    </location>
</feature>
<feature type="strand" evidence="12">
    <location>
        <begin position="21"/>
        <end position="24"/>
    </location>
</feature>
<feature type="turn" evidence="12">
    <location>
        <begin position="25"/>
        <end position="27"/>
    </location>
</feature>
<feature type="helix" evidence="12">
    <location>
        <begin position="39"/>
        <end position="52"/>
    </location>
</feature>
<feature type="turn" evidence="12">
    <location>
        <begin position="59"/>
        <end position="61"/>
    </location>
</feature>
<feature type="strand" evidence="12">
    <location>
        <begin position="66"/>
        <end position="69"/>
    </location>
</feature>
<feature type="strand" evidence="12">
    <location>
        <begin position="72"/>
        <end position="75"/>
    </location>
</feature>
<feature type="helix" evidence="12">
    <location>
        <begin position="80"/>
        <end position="98"/>
    </location>
</feature>
<feature type="helix" evidence="12">
    <location>
        <begin position="100"/>
        <end position="102"/>
    </location>
</feature>
<feature type="helix" evidence="12">
    <location>
        <begin position="105"/>
        <end position="107"/>
    </location>
</feature>
<feature type="helix" evidence="12">
    <location>
        <begin position="112"/>
        <end position="114"/>
    </location>
</feature>
<keyword id="KW-0002">3D-structure</keyword>
<keyword id="KW-0106">Calcium</keyword>
<keyword id="KW-0903">Direct protein sequencing</keyword>
<keyword id="KW-1015">Disulfide bond</keyword>
<keyword id="KW-1199">Hemostasis impairing toxin</keyword>
<keyword id="KW-0378">Hydrolase</keyword>
<keyword id="KW-0442">Lipid degradation</keyword>
<keyword id="KW-0443">Lipid metabolism</keyword>
<keyword id="KW-0479">Metal-binding</keyword>
<keyword id="KW-1201">Platelet aggregation inhibiting toxin</keyword>
<keyword id="KW-0964">Secreted</keyword>
<keyword id="KW-0800">Toxin</keyword>
<proteinExistence type="evidence at protein level"/>
<reference key="1">
    <citation type="journal article" date="2003" name="J. Hubei Univ.">
        <title>Isolation and sequencing of five variants of phospholipase A2 from venom of snake Trimeresurus stejnegeri.</title>
        <authorList>
            <person name="Li S.-Y."/>
            <person name="Guo Z.-X."/>
            <person name="Yang Y.-Y."/>
            <person name="Wang W.-Y."/>
            <person name="Xiong Y.-L."/>
        </authorList>
    </citation>
    <scope>PROTEIN SEQUENCE</scope>
    <scope>FUNCTION</scope>
    <scope>SUBCELLULAR LOCATION</scope>
    <source>
        <tissue>Venom</tissue>
    </source>
</reference>
<reference key="2">
    <citation type="journal article" date="2014" name="FEBS Lett.">
        <title>Crystal structure of phospholipase PA2-Vb, a protease-activated receptor agonist from the Trimeresurus stejnegeri snake venom.</title>
        <authorList>
            <person name="Zeng F."/>
            <person name="Zhang W."/>
            <person name="Xue N."/>
            <person name="Teng M."/>
            <person name="Li X."/>
            <person name="Shen B."/>
        </authorList>
    </citation>
    <scope>X-RAY CRYSTALLOGRAPHY (1.60 ANGSTROMS)</scope>
    <scope>CATALYTIC ACTIVITY</scope>
    <scope>ACTIVITY REGULATION</scope>
    <scope>SUBCELLULAR LOCATION</scope>
    <source>
        <tissue>Venom</tissue>
    </source>
</reference>
<comment type="function">
    <text evidence="4 5">Snake venom phospholipase A2 (PLA2) that inhibits platelet aggregation induced by ADP, arachidonic acid and PAF (Ref.1). Acts in a enzymatic independent manner on a proteinase-activated receptor (PAR1, F2R) to evoke calcium release through the inositol 1,4,5-trisphosphate receptor (ITPR1, IP3R) and induces mouse aorta contraction (PubMed:25447533). PAR1, phospholipase C and IP3R inhibitors suppress PA2-induced aorta contraction (PubMed:25447533). PLA2 catalyzes the calcium-dependent hydrolysis of the 2-acyl groups in 3-sn-phosphoglycerides.</text>
</comment>
<comment type="catalytic activity">
    <reaction evidence="2 3 4">
        <text>a 1,2-diacyl-sn-glycero-3-phosphocholine + H2O = a 1-acyl-sn-glycero-3-phosphocholine + a fatty acid + H(+)</text>
        <dbReference type="Rhea" id="RHEA:15801"/>
        <dbReference type="ChEBI" id="CHEBI:15377"/>
        <dbReference type="ChEBI" id="CHEBI:15378"/>
        <dbReference type="ChEBI" id="CHEBI:28868"/>
        <dbReference type="ChEBI" id="CHEBI:57643"/>
        <dbReference type="ChEBI" id="CHEBI:58168"/>
        <dbReference type="EC" id="3.1.1.4"/>
    </reaction>
</comment>
<comment type="cofactor">
    <cofactor evidence="1">
        <name>Ca(2+)</name>
        <dbReference type="ChEBI" id="CHEBI:29108"/>
    </cofactor>
    <text evidence="1">Binds 1 Ca(2+) ion.</text>
</comment>
<comment type="activity regulation">
    <text evidence="4">Preincubation with heparin slightly increase the enzymatic activity.</text>
</comment>
<comment type="subunit">
    <text evidence="4">Monomer (predominant). Non-covalently linked homodimers are also observed.</text>
</comment>
<comment type="interaction">
    <interactant intactId="EBI-10105591">
        <id>P82896</id>
    </interactant>
    <interactant intactId="EBI-10105591">
        <id>P82896</id>
        <label>-</label>
    </interactant>
    <organismsDiffer>false</organismsDiffer>
    <experiments>2</experiments>
</comment>
<comment type="subcellular location">
    <subcellularLocation>
        <location evidence="4 5">Secreted</location>
    </subcellularLocation>
</comment>
<comment type="tissue specificity">
    <text evidence="9 10">Expressed by the venom gland.</text>
</comment>
<comment type="miscellaneous">
    <text evidence="5">Hemolytic and neurotoxic activities are not detected.</text>
</comment>
<comment type="similarity">
    <text evidence="8">Belongs to the phospholipase A2 family. Group II subfamily. D49 sub-subfamily.</text>
</comment>
<accession>P82896</accession>
<dbReference type="EC" id="3.1.1.4" evidence="4"/>
<dbReference type="PDB" id="4RFP">
    <property type="method" value="X-ray"/>
    <property type="resolution" value="1.60 A"/>
    <property type="chains" value="A/B=1-122"/>
</dbReference>
<dbReference type="PDBsum" id="4RFP"/>
<dbReference type="SMR" id="P82896"/>
<dbReference type="MINT" id="P82896"/>
<dbReference type="EvolutionaryTrace" id="P82896"/>
<dbReference type="GO" id="GO:0005576">
    <property type="term" value="C:extracellular region"/>
    <property type="evidence" value="ECO:0007669"/>
    <property type="project" value="UniProtKB-SubCell"/>
</dbReference>
<dbReference type="GO" id="GO:0005509">
    <property type="term" value="F:calcium ion binding"/>
    <property type="evidence" value="ECO:0007669"/>
    <property type="project" value="InterPro"/>
</dbReference>
<dbReference type="GO" id="GO:0047498">
    <property type="term" value="F:calcium-dependent phospholipase A2 activity"/>
    <property type="evidence" value="ECO:0007669"/>
    <property type="project" value="TreeGrafter"/>
</dbReference>
<dbReference type="GO" id="GO:0042802">
    <property type="term" value="F:identical protein binding"/>
    <property type="evidence" value="ECO:0000353"/>
    <property type="project" value="IntAct"/>
</dbReference>
<dbReference type="GO" id="GO:0005543">
    <property type="term" value="F:phospholipid binding"/>
    <property type="evidence" value="ECO:0007669"/>
    <property type="project" value="TreeGrafter"/>
</dbReference>
<dbReference type="GO" id="GO:0090729">
    <property type="term" value="F:toxin activity"/>
    <property type="evidence" value="ECO:0007669"/>
    <property type="project" value="UniProtKB-KW"/>
</dbReference>
<dbReference type="GO" id="GO:0050482">
    <property type="term" value="P:arachidonate secretion"/>
    <property type="evidence" value="ECO:0007669"/>
    <property type="project" value="InterPro"/>
</dbReference>
<dbReference type="GO" id="GO:0016042">
    <property type="term" value="P:lipid catabolic process"/>
    <property type="evidence" value="ECO:0007669"/>
    <property type="project" value="UniProtKB-KW"/>
</dbReference>
<dbReference type="GO" id="GO:0042130">
    <property type="term" value="P:negative regulation of T cell proliferation"/>
    <property type="evidence" value="ECO:0007669"/>
    <property type="project" value="TreeGrafter"/>
</dbReference>
<dbReference type="GO" id="GO:0006644">
    <property type="term" value="P:phospholipid metabolic process"/>
    <property type="evidence" value="ECO:0007669"/>
    <property type="project" value="InterPro"/>
</dbReference>
<dbReference type="CDD" id="cd00125">
    <property type="entry name" value="PLA2c"/>
    <property type="match status" value="1"/>
</dbReference>
<dbReference type="FunFam" id="1.20.90.10:FF:000001">
    <property type="entry name" value="Basic phospholipase A2 homolog"/>
    <property type="match status" value="1"/>
</dbReference>
<dbReference type="Gene3D" id="1.20.90.10">
    <property type="entry name" value="Phospholipase A2 domain"/>
    <property type="match status" value="1"/>
</dbReference>
<dbReference type="InterPro" id="IPR001211">
    <property type="entry name" value="PLipase_A2"/>
</dbReference>
<dbReference type="InterPro" id="IPR033112">
    <property type="entry name" value="PLipase_A2_Asp_AS"/>
</dbReference>
<dbReference type="InterPro" id="IPR016090">
    <property type="entry name" value="PLipase_A2_dom"/>
</dbReference>
<dbReference type="InterPro" id="IPR036444">
    <property type="entry name" value="PLipase_A2_dom_sf"/>
</dbReference>
<dbReference type="InterPro" id="IPR033113">
    <property type="entry name" value="PLipase_A2_His_AS"/>
</dbReference>
<dbReference type="PANTHER" id="PTHR11716">
    <property type="entry name" value="PHOSPHOLIPASE A2 FAMILY MEMBER"/>
    <property type="match status" value="1"/>
</dbReference>
<dbReference type="PANTHER" id="PTHR11716:SF9">
    <property type="entry name" value="PHOSPHOLIPASE A2, MEMBRANE ASSOCIATED"/>
    <property type="match status" value="1"/>
</dbReference>
<dbReference type="Pfam" id="PF00068">
    <property type="entry name" value="Phospholip_A2_1"/>
    <property type="match status" value="1"/>
</dbReference>
<dbReference type="PRINTS" id="PR00389">
    <property type="entry name" value="PHPHLIPASEA2"/>
</dbReference>
<dbReference type="SMART" id="SM00085">
    <property type="entry name" value="PA2c"/>
    <property type="match status" value="1"/>
</dbReference>
<dbReference type="SUPFAM" id="SSF48619">
    <property type="entry name" value="Phospholipase A2, PLA2"/>
    <property type="match status" value="1"/>
</dbReference>
<dbReference type="PROSITE" id="PS00119">
    <property type="entry name" value="PA2_ASP"/>
    <property type="match status" value="1"/>
</dbReference>
<dbReference type="PROSITE" id="PS00118">
    <property type="entry name" value="PA2_HIS"/>
    <property type="match status" value="1"/>
</dbReference>
<protein>
    <recommendedName>
        <fullName evidence="8">Acidic phospholipase A2 5</fullName>
        <shortName>svPLA2</shortName>
        <ecNumber evidence="4">3.1.1.4</ecNumber>
    </recommendedName>
    <alternativeName>
        <fullName evidence="6">PA2-Vb</fullName>
    </alternativeName>
    <alternativeName>
        <fullName evidence="7">PLA2-V</fullName>
    </alternativeName>
    <alternativeName>
        <fullName>Phosphatidylcholine 2-acylhydrolase</fullName>
    </alternativeName>
</protein>
<name>PA2A5_TRIST</name>
<evidence type="ECO:0000250" key="1"/>
<evidence type="ECO:0000255" key="2">
    <source>
        <dbReference type="PROSITE-ProRule" id="PRU10035"/>
    </source>
</evidence>
<evidence type="ECO:0000255" key="3">
    <source>
        <dbReference type="PROSITE-ProRule" id="PRU10036"/>
    </source>
</evidence>
<evidence type="ECO:0000269" key="4">
    <source>
    </source>
</evidence>
<evidence type="ECO:0000269" key="5">
    <source ref="1"/>
</evidence>
<evidence type="ECO:0000303" key="6">
    <source>
    </source>
</evidence>
<evidence type="ECO:0000303" key="7">
    <source ref="1"/>
</evidence>
<evidence type="ECO:0000305" key="8"/>
<evidence type="ECO:0000305" key="9">
    <source>
    </source>
</evidence>
<evidence type="ECO:0000305" key="10">
    <source ref="1"/>
</evidence>
<evidence type="ECO:0007744" key="11">
    <source>
        <dbReference type="PDB" id="4RFP"/>
    </source>
</evidence>
<evidence type="ECO:0007829" key="12">
    <source>
        <dbReference type="PDB" id="4RFP"/>
    </source>
</evidence>
<sequence>NLMQFELLIMKVAGRSGIVWYSDYGCFCGKGGHGRPQDATDRCCFVHDCCYGKVTECDPKMDFYRYSSNNGDIVCEANNPCTKEICECDKAAAICFRDNKDTYDNKYWNIPMEGCQEESEPC</sequence>
<organism>
    <name type="scientific">Trimeresurus stejnegeri</name>
    <name type="common">Chinese green tree viper</name>
    <name type="synonym">Viridovipera stejnegeri</name>
    <dbReference type="NCBI Taxonomy" id="39682"/>
    <lineage>
        <taxon>Eukaryota</taxon>
        <taxon>Metazoa</taxon>
        <taxon>Chordata</taxon>
        <taxon>Craniata</taxon>
        <taxon>Vertebrata</taxon>
        <taxon>Euteleostomi</taxon>
        <taxon>Lepidosauria</taxon>
        <taxon>Squamata</taxon>
        <taxon>Bifurcata</taxon>
        <taxon>Unidentata</taxon>
        <taxon>Episquamata</taxon>
        <taxon>Toxicofera</taxon>
        <taxon>Serpentes</taxon>
        <taxon>Colubroidea</taxon>
        <taxon>Viperidae</taxon>
        <taxon>Crotalinae</taxon>
        <taxon>Trimeresurus</taxon>
    </lineage>
</organism>